<feature type="chain" id="PRO_0000302275" description="Large ribosomal subunit protein bL36">
    <location>
        <begin position="1"/>
        <end position="38"/>
    </location>
</feature>
<proteinExistence type="inferred from homology"/>
<protein>
    <recommendedName>
        <fullName evidence="1">Large ribosomal subunit protein bL36</fullName>
    </recommendedName>
    <alternativeName>
        <fullName evidence="2">50S ribosomal protein L36</fullName>
    </alternativeName>
</protein>
<dbReference type="EMBL" id="CP000082">
    <property type="protein sequence ID" value="AAZ18373.1"/>
    <property type="molecule type" value="Genomic_DNA"/>
</dbReference>
<dbReference type="RefSeq" id="WP_011279805.1">
    <property type="nucleotide sequence ID" value="NC_007204.1"/>
</dbReference>
<dbReference type="SMR" id="Q4FUD5"/>
<dbReference type="STRING" id="259536.Psyc_0510"/>
<dbReference type="KEGG" id="par:Psyc_0510"/>
<dbReference type="eggNOG" id="COG0257">
    <property type="taxonomic scope" value="Bacteria"/>
</dbReference>
<dbReference type="HOGENOM" id="CLU_135723_6_2_6"/>
<dbReference type="OrthoDB" id="9802520at2"/>
<dbReference type="Proteomes" id="UP000000546">
    <property type="component" value="Chromosome"/>
</dbReference>
<dbReference type="GO" id="GO:0005737">
    <property type="term" value="C:cytoplasm"/>
    <property type="evidence" value="ECO:0007669"/>
    <property type="project" value="UniProtKB-ARBA"/>
</dbReference>
<dbReference type="GO" id="GO:1990904">
    <property type="term" value="C:ribonucleoprotein complex"/>
    <property type="evidence" value="ECO:0007669"/>
    <property type="project" value="UniProtKB-KW"/>
</dbReference>
<dbReference type="GO" id="GO:0005840">
    <property type="term" value="C:ribosome"/>
    <property type="evidence" value="ECO:0007669"/>
    <property type="project" value="UniProtKB-KW"/>
</dbReference>
<dbReference type="GO" id="GO:0003735">
    <property type="term" value="F:structural constituent of ribosome"/>
    <property type="evidence" value="ECO:0007669"/>
    <property type="project" value="InterPro"/>
</dbReference>
<dbReference type="GO" id="GO:0006412">
    <property type="term" value="P:translation"/>
    <property type="evidence" value="ECO:0007669"/>
    <property type="project" value="UniProtKB-UniRule"/>
</dbReference>
<dbReference type="HAMAP" id="MF_00251">
    <property type="entry name" value="Ribosomal_bL36"/>
    <property type="match status" value="1"/>
</dbReference>
<dbReference type="InterPro" id="IPR000473">
    <property type="entry name" value="Ribosomal_bL36"/>
</dbReference>
<dbReference type="InterPro" id="IPR035977">
    <property type="entry name" value="Ribosomal_bL36_sp"/>
</dbReference>
<dbReference type="NCBIfam" id="TIGR01022">
    <property type="entry name" value="rpmJ_bact"/>
    <property type="match status" value="1"/>
</dbReference>
<dbReference type="PANTHER" id="PTHR42888">
    <property type="entry name" value="50S RIBOSOMAL PROTEIN L36, CHLOROPLASTIC"/>
    <property type="match status" value="1"/>
</dbReference>
<dbReference type="PANTHER" id="PTHR42888:SF1">
    <property type="entry name" value="LARGE RIBOSOMAL SUBUNIT PROTEIN BL36C"/>
    <property type="match status" value="1"/>
</dbReference>
<dbReference type="Pfam" id="PF00444">
    <property type="entry name" value="Ribosomal_L36"/>
    <property type="match status" value="1"/>
</dbReference>
<dbReference type="SUPFAM" id="SSF57840">
    <property type="entry name" value="Ribosomal protein L36"/>
    <property type="match status" value="1"/>
</dbReference>
<dbReference type="PROSITE" id="PS00828">
    <property type="entry name" value="RIBOSOMAL_L36"/>
    <property type="match status" value="1"/>
</dbReference>
<comment type="similarity">
    <text evidence="1">Belongs to the bacterial ribosomal protein bL36 family.</text>
</comment>
<reference key="1">
    <citation type="journal article" date="2010" name="Appl. Environ. Microbiol.">
        <title>The genome sequence of Psychrobacter arcticus 273-4, a psychroactive Siberian permafrost bacterium, reveals mechanisms for adaptation to low-temperature growth.</title>
        <authorList>
            <person name="Ayala-del-Rio H.L."/>
            <person name="Chain P.S."/>
            <person name="Grzymski J.J."/>
            <person name="Ponder M.A."/>
            <person name="Ivanova N."/>
            <person name="Bergholz P.W."/>
            <person name="Di Bartolo G."/>
            <person name="Hauser L."/>
            <person name="Land M."/>
            <person name="Bakermans C."/>
            <person name="Rodrigues D."/>
            <person name="Klappenbach J."/>
            <person name="Zarka D."/>
            <person name="Larimer F."/>
            <person name="Richardson P."/>
            <person name="Murray A."/>
            <person name="Thomashow M."/>
            <person name="Tiedje J.M."/>
        </authorList>
    </citation>
    <scope>NUCLEOTIDE SEQUENCE [LARGE SCALE GENOMIC DNA]</scope>
    <source>
        <strain>DSM 17307 / VKM B-2377 / 273-4</strain>
    </source>
</reference>
<sequence length="38" mass="4303">MKVQASVKKICGSCKVVRRKGRVHVICTAEPRHKQRQG</sequence>
<gene>
    <name evidence="1" type="primary">rpmJ</name>
    <name type="ordered locus">Psyc_0510</name>
</gene>
<keyword id="KW-1185">Reference proteome</keyword>
<keyword id="KW-0687">Ribonucleoprotein</keyword>
<keyword id="KW-0689">Ribosomal protein</keyword>
<evidence type="ECO:0000255" key="1">
    <source>
        <dbReference type="HAMAP-Rule" id="MF_00251"/>
    </source>
</evidence>
<evidence type="ECO:0000305" key="2"/>
<name>RL36_PSYA2</name>
<organism>
    <name type="scientific">Psychrobacter arcticus (strain DSM 17307 / VKM B-2377 / 273-4)</name>
    <dbReference type="NCBI Taxonomy" id="259536"/>
    <lineage>
        <taxon>Bacteria</taxon>
        <taxon>Pseudomonadati</taxon>
        <taxon>Pseudomonadota</taxon>
        <taxon>Gammaproteobacteria</taxon>
        <taxon>Moraxellales</taxon>
        <taxon>Moraxellaceae</taxon>
        <taxon>Psychrobacter</taxon>
    </lineage>
</organism>
<accession>Q4FUD5</accession>